<keyword id="KW-0436">Ligase</keyword>
<keyword id="KW-0596">Phosphopantetheine</keyword>
<keyword id="KW-0597">Phosphoprotein</keyword>
<sequence>MTIEFTDWPQDRAQRYRDAGYWIDQPLTEILHSRCQAQPQALAIICGERRFTYGELDTLSSILASRLAEQGLGQGDTALVQLPNVAEFYIVLFALLKAGIVPLNALFSHRRLELTAYAKQIVPKLLIASREHEVFRDDAYVQAFAEVGAAPAVTLLLGESDPAASLAHWIETPGSQPVAYAPTAADQVALFQLSGGSTGIPKLIPRTHNDYHYNARACADVCALNAHTRFLCAVPAAHNFLLSSPGALGVFHAGGCVVMAASPEPLSCFALVEQHEVNTVALVPSAVALWLQAAPAHRDKLQSLAYLQVGGAVFADSLARQVPGVLGCQLQQVFGMAEGLINYTRLDDSDEQIFTTQGRPVSPDDEIKIVDEQGVPVAPGEPGMLATRGPYTFCGYYKAPEQNASAFDAEGFYYSGDLVVLTPSGDLRVVGRIKDQINRGGEKVASEEIENLLVLHPEVTHAGLVAMPDEALGEKSCAFVVSRNPSLKAPALRRHLMELGIAEYKLPDRIRLIEAMPLTAVGKIDKKQLRHLVSVENTRTWLQTRLRQLIEDSEELDPEENLIFYGLDSLQVMKLAAELKARGIEVSFEELASTPTLASWWALVEARQKAA</sequence>
<accession>Q1IAK8</accession>
<proteinExistence type="evidence at protein level"/>
<dbReference type="EC" id="6.2.1.61" evidence="2"/>
<dbReference type="EMBL" id="CT573326">
    <property type="protein sequence ID" value="CAK15309.1"/>
    <property type="molecule type" value="Genomic_DNA"/>
</dbReference>
<dbReference type="RefSeq" id="WP_011533708.1">
    <property type="nucleotide sequence ID" value="NC_008027.1"/>
</dbReference>
<dbReference type="SMR" id="Q1IAK8"/>
<dbReference type="STRING" id="384676.PSEEN2505"/>
<dbReference type="GeneID" id="32805679"/>
<dbReference type="KEGG" id="pen:PSEEN2505"/>
<dbReference type="eggNOG" id="COG1021">
    <property type="taxonomic scope" value="Bacteria"/>
</dbReference>
<dbReference type="HOGENOM" id="CLU_000022_59_7_6"/>
<dbReference type="OrthoDB" id="9803968at2"/>
<dbReference type="BioCyc" id="MetaCyc:MONOMER-20463"/>
<dbReference type="BRENDA" id="6.2.1.61">
    <property type="organism ID" value="12484"/>
</dbReference>
<dbReference type="UniPathway" id="UPA00024"/>
<dbReference type="Proteomes" id="UP000000658">
    <property type="component" value="Chromosome"/>
</dbReference>
<dbReference type="GO" id="GO:0008668">
    <property type="term" value="F:2,3-dihydroxybenzoate--[aryl-carrier protein] ligase"/>
    <property type="evidence" value="ECO:0007669"/>
    <property type="project" value="InterPro"/>
</dbReference>
<dbReference type="GO" id="GO:0019290">
    <property type="term" value="P:siderophore biosynthetic process"/>
    <property type="evidence" value="ECO:0007669"/>
    <property type="project" value="InterPro"/>
</dbReference>
<dbReference type="CDD" id="cd05920">
    <property type="entry name" value="23DHB-AMP_lg"/>
    <property type="match status" value="1"/>
</dbReference>
<dbReference type="FunFam" id="2.30.38.10:FF:000003">
    <property type="entry name" value="Vibriobactin-specific 2,3-dihydroxybenzoate-AMP ligase"/>
    <property type="match status" value="1"/>
</dbReference>
<dbReference type="Gene3D" id="3.30.300.30">
    <property type="match status" value="1"/>
</dbReference>
<dbReference type="Gene3D" id="1.10.1200.10">
    <property type="entry name" value="ACP-like"/>
    <property type="match status" value="1"/>
</dbReference>
<dbReference type="Gene3D" id="3.40.50.12780">
    <property type="entry name" value="N-terminal domain of ligase-like"/>
    <property type="match status" value="1"/>
</dbReference>
<dbReference type="InterPro" id="IPR036736">
    <property type="entry name" value="ACP-like_sf"/>
</dbReference>
<dbReference type="InterPro" id="IPR025110">
    <property type="entry name" value="AMP-bd_C"/>
</dbReference>
<dbReference type="InterPro" id="IPR045851">
    <property type="entry name" value="AMP-bd_C_sf"/>
</dbReference>
<dbReference type="InterPro" id="IPR020845">
    <property type="entry name" value="AMP-binding_CS"/>
</dbReference>
<dbReference type="InterPro" id="IPR000873">
    <property type="entry name" value="AMP-dep_synth/lig_dom"/>
</dbReference>
<dbReference type="InterPro" id="IPR042099">
    <property type="entry name" value="ANL_N_sf"/>
</dbReference>
<dbReference type="InterPro" id="IPR050237">
    <property type="entry name" value="ATP-dep_AMP-bd_enzyme"/>
</dbReference>
<dbReference type="InterPro" id="IPR011963">
    <property type="entry name" value="DHB_AMP_lig"/>
</dbReference>
<dbReference type="InterPro" id="IPR009081">
    <property type="entry name" value="PP-bd_ACP"/>
</dbReference>
<dbReference type="NCBIfam" id="TIGR02275">
    <property type="entry name" value="DHB_AMP_lig"/>
    <property type="match status" value="1"/>
</dbReference>
<dbReference type="NCBIfam" id="NF008192">
    <property type="entry name" value="PRK10946.1"/>
    <property type="match status" value="1"/>
</dbReference>
<dbReference type="PANTHER" id="PTHR43767">
    <property type="entry name" value="LONG-CHAIN-FATTY-ACID--COA LIGASE"/>
    <property type="match status" value="1"/>
</dbReference>
<dbReference type="PANTHER" id="PTHR43767:SF10">
    <property type="entry name" value="SURFACTIN SYNTHASE SUBUNIT 1"/>
    <property type="match status" value="1"/>
</dbReference>
<dbReference type="Pfam" id="PF00501">
    <property type="entry name" value="AMP-binding"/>
    <property type="match status" value="1"/>
</dbReference>
<dbReference type="Pfam" id="PF13193">
    <property type="entry name" value="AMP-binding_C"/>
    <property type="match status" value="1"/>
</dbReference>
<dbReference type="Pfam" id="PF00550">
    <property type="entry name" value="PP-binding"/>
    <property type="match status" value="1"/>
</dbReference>
<dbReference type="SUPFAM" id="SSF56801">
    <property type="entry name" value="Acetyl-CoA synthetase-like"/>
    <property type="match status" value="1"/>
</dbReference>
<dbReference type="SUPFAM" id="SSF47336">
    <property type="entry name" value="ACP-like"/>
    <property type="match status" value="1"/>
</dbReference>
<dbReference type="PROSITE" id="PS00455">
    <property type="entry name" value="AMP_BINDING"/>
    <property type="match status" value="1"/>
</dbReference>
<dbReference type="PROSITE" id="PS50075">
    <property type="entry name" value="CARRIER"/>
    <property type="match status" value="1"/>
</dbReference>
<evidence type="ECO:0000255" key="1">
    <source>
        <dbReference type="PROSITE-ProRule" id="PRU00258"/>
    </source>
</evidence>
<evidence type="ECO:0000269" key="2">
    <source>
    </source>
</evidence>
<evidence type="ECO:0000303" key="3">
    <source>
    </source>
</evidence>
<evidence type="ECO:0000305" key="4"/>
<evidence type="ECO:0000312" key="5">
    <source>
        <dbReference type="EMBL" id="CAK15309.1"/>
    </source>
</evidence>
<gene>
    <name evidence="3" type="primary">pmsE</name>
    <name evidence="5" type="ordered locus">PSEEN2505</name>
</gene>
<organism>
    <name type="scientific">Pseudomonas entomophila (strain L48)</name>
    <dbReference type="NCBI Taxonomy" id="384676"/>
    <lineage>
        <taxon>Bacteria</taxon>
        <taxon>Pseudomonadati</taxon>
        <taxon>Pseudomonadota</taxon>
        <taxon>Gammaproteobacteria</taxon>
        <taxon>Pseudomonadales</taxon>
        <taxon>Pseudomonadaceae</taxon>
        <taxon>Pseudomonas</taxon>
    </lineage>
</organism>
<reference key="1">
    <citation type="journal article" date="2006" name="Nat. Biotechnol.">
        <title>Complete genome sequence of the entomopathogenic and metabolically versatile soil bacterium Pseudomonas entomophila.</title>
        <authorList>
            <person name="Vodovar N."/>
            <person name="Vallenet D."/>
            <person name="Cruveiller S."/>
            <person name="Rouy Z."/>
            <person name="Barbe V."/>
            <person name="Acosta C."/>
            <person name="Cattolico L."/>
            <person name="Jubin C."/>
            <person name="Lajus A."/>
            <person name="Segurens B."/>
            <person name="Vacherie B."/>
            <person name="Wincker P."/>
            <person name="Weissenbach J."/>
            <person name="Lemaitre B."/>
            <person name="Medigue C."/>
            <person name="Boccard F."/>
        </authorList>
    </citation>
    <scope>NUCLEOTIDE SEQUENCE [LARGE SCALE GENOMIC DNA]</scope>
    <source>
        <strain>L48</strain>
    </source>
</reference>
<reference key="2">
    <citation type="journal article" date="2008" name="J. Am. Chem. Soc.">
        <title>A latent oxazoline electrophile for N-O-C bond formation in pseudomonine biosynthesis.</title>
        <authorList>
            <person name="Sattely E.S."/>
            <person name="Walsh C.T."/>
        </authorList>
    </citation>
    <scope>FUNCTION</scope>
    <scope>CATALYTIC ACTIVITY</scope>
    <scope>COFACTOR</scope>
    <scope>PATHWAY</scope>
    <source>
        <strain>L48</strain>
    </source>
</reference>
<name>PMSE_PSEE4</name>
<comment type="function">
    <text evidence="2">Involved in the biosynthesis of the siderophore pseudomonine. Specifically adenylates salicylate and loads it onto its peptidyl carrier domain, via a thioester linkage to the phosphopanthetheine moiety.</text>
</comment>
<comment type="catalytic activity">
    <reaction evidence="2">
        <text>salicylate + holo-[ACP] + ATP = salicyl-[ACP] + AMP + diphosphate</text>
        <dbReference type="Rhea" id="RHEA:61648"/>
        <dbReference type="Rhea" id="RHEA-COMP:9685"/>
        <dbReference type="Rhea" id="RHEA-COMP:19022"/>
        <dbReference type="ChEBI" id="CHEBI:30616"/>
        <dbReference type="ChEBI" id="CHEBI:30762"/>
        <dbReference type="ChEBI" id="CHEBI:33019"/>
        <dbReference type="ChEBI" id="CHEBI:64479"/>
        <dbReference type="ChEBI" id="CHEBI:86464"/>
        <dbReference type="ChEBI" id="CHEBI:456215"/>
        <dbReference type="EC" id="6.2.1.61"/>
    </reaction>
    <physiologicalReaction direction="left-to-right" evidence="2">
        <dbReference type="Rhea" id="RHEA:61649"/>
    </physiologicalReaction>
</comment>
<comment type="cofactor">
    <cofactor evidence="2">
        <name>pantetheine 4'-phosphate</name>
        <dbReference type="ChEBI" id="CHEBI:47942"/>
    </cofactor>
</comment>
<comment type="pathway">
    <text evidence="2">Siderophore biosynthesis; pseudomonine biosynthesis.</text>
</comment>
<comment type="similarity">
    <text evidence="4">Belongs to the ATP-dependent AMP-binding enzyme family.</text>
</comment>
<protein>
    <recommendedName>
        <fullName evidence="4">Pseudomonine synthase PmsE</fullName>
        <ecNumber evidence="2">6.2.1.61</ecNumber>
    </recommendedName>
    <alternativeName>
        <fullName evidence="4">Nonribosomal peptide synthase PmsE</fullName>
    </alternativeName>
    <alternativeName>
        <fullName evidence="4">Salicylate--[aryl-carrier protein] ligase</fullName>
    </alternativeName>
</protein>
<feature type="chain" id="PRO_0000454822" description="Pseudomonine synthase PmsE">
    <location>
        <begin position="1"/>
        <end position="611"/>
    </location>
</feature>
<feature type="domain" description="Carrier" evidence="1">
    <location>
        <begin position="533"/>
        <end position="608"/>
    </location>
</feature>
<feature type="modified residue" description="O-(pantetheine 4'-phosphoryl)serine" evidence="1">
    <location>
        <position position="569"/>
    </location>
</feature>